<accession>Q9D0B6</accession>
<accession>B1AUP5</accession>
<accession>Q8C5Z2</accession>
<accession>Q9CVL0</accession>
<comment type="alternative products">
    <event type="alternative splicing"/>
    <isoform>
        <id>Q9D0B6-1</id>
        <name>1</name>
        <sequence type="displayed"/>
    </isoform>
    <isoform>
        <id>Q9D0B6-2</id>
        <name>2</name>
        <sequence type="described" ref="VSP_021180"/>
    </isoform>
</comment>
<comment type="similarity">
    <text evidence="4">Belongs to the PBDC1 family.</text>
</comment>
<dbReference type="EMBL" id="AK007655">
    <property type="protein sequence ID" value="BAB25165.3"/>
    <property type="molecule type" value="mRNA"/>
</dbReference>
<dbReference type="EMBL" id="AK011610">
    <property type="protein sequence ID" value="BAB27731.1"/>
    <property type="molecule type" value="mRNA"/>
</dbReference>
<dbReference type="EMBL" id="AK030507">
    <property type="protein sequence ID" value="BAC26994.1"/>
    <property type="molecule type" value="mRNA"/>
</dbReference>
<dbReference type="EMBL" id="AK076889">
    <property type="protein sequence ID" value="BAC36520.1"/>
    <property type="molecule type" value="mRNA"/>
</dbReference>
<dbReference type="EMBL" id="AL671897">
    <property type="status" value="NOT_ANNOTATED_CDS"/>
    <property type="molecule type" value="Genomic_DNA"/>
</dbReference>
<dbReference type="EMBL" id="BC035042">
    <property type="protein sequence ID" value="AAH35042.1"/>
    <property type="molecule type" value="mRNA"/>
</dbReference>
<dbReference type="EMBL" id="BC044719">
    <property type="protein sequence ID" value="AAH44719.1"/>
    <property type="molecule type" value="mRNA"/>
</dbReference>
<dbReference type="EMBL" id="BC061070">
    <property type="protein sequence ID" value="AAH61070.1"/>
    <property type="molecule type" value="mRNA"/>
</dbReference>
<dbReference type="CCDS" id="CCDS30334.1">
    <molecule id="Q9D0B6-1"/>
</dbReference>
<dbReference type="CCDS" id="CCDS72419.1">
    <molecule id="Q9D0B6-2"/>
</dbReference>
<dbReference type="RefSeq" id="NP_001268800.1">
    <molecule id="Q9D0B6-2"/>
    <property type="nucleotide sequence ID" value="NM_001281871.1"/>
</dbReference>
<dbReference type="RefSeq" id="NP_080588.1">
    <molecule id="Q9D0B6-1"/>
    <property type="nucleotide sequence ID" value="NM_026312.5"/>
</dbReference>
<dbReference type="SMR" id="Q9D0B6"/>
<dbReference type="BioGRID" id="212364">
    <property type="interactions" value="4"/>
</dbReference>
<dbReference type="FunCoup" id="Q9D0B6">
    <property type="interactions" value="1743"/>
</dbReference>
<dbReference type="STRING" id="10090.ENSMUSP00000033577"/>
<dbReference type="iPTMnet" id="Q9D0B6"/>
<dbReference type="PhosphoSitePlus" id="Q9D0B6"/>
<dbReference type="SwissPalm" id="Q9D0B6"/>
<dbReference type="PaxDb" id="10090-ENSMUSP00000033577"/>
<dbReference type="PeptideAtlas" id="Q9D0B6"/>
<dbReference type="ProteomicsDB" id="287791">
    <molecule id="Q9D0B6-1"/>
</dbReference>
<dbReference type="ProteomicsDB" id="287792">
    <molecule id="Q9D0B6-2"/>
</dbReference>
<dbReference type="Pumba" id="Q9D0B6"/>
<dbReference type="Antibodypedia" id="507">
    <property type="antibodies" value="197 antibodies from 18 providers"/>
</dbReference>
<dbReference type="DNASU" id="67683"/>
<dbReference type="Ensembl" id="ENSMUST00000033577.11">
    <molecule id="Q9D0B6-1"/>
    <property type="protein sequence ID" value="ENSMUSP00000033577.5"/>
    <property type="gene ID" value="ENSMUSG00000031226.14"/>
</dbReference>
<dbReference type="Ensembl" id="ENSMUST00000119477.2">
    <molecule id="Q9D0B6-2"/>
    <property type="protein sequence ID" value="ENSMUSP00000113288.2"/>
    <property type="gene ID" value="ENSMUSG00000031226.14"/>
</dbReference>
<dbReference type="GeneID" id="67683"/>
<dbReference type="KEGG" id="mmu:67683"/>
<dbReference type="UCSC" id="uc009uat.2">
    <molecule id="Q9D0B6-1"/>
    <property type="organism name" value="mouse"/>
</dbReference>
<dbReference type="AGR" id="MGI:1914933"/>
<dbReference type="CTD" id="51260"/>
<dbReference type="MGI" id="MGI:1914933">
    <property type="gene designation" value="Pbdc1"/>
</dbReference>
<dbReference type="VEuPathDB" id="HostDB:ENSMUSG00000031226"/>
<dbReference type="eggNOG" id="KOG4093">
    <property type="taxonomic scope" value="Eukaryota"/>
</dbReference>
<dbReference type="GeneTree" id="ENSGT00390000016333"/>
<dbReference type="HOGENOM" id="CLU_103791_0_0_1"/>
<dbReference type="InParanoid" id="Q9D0B6"/>
<dbReference type="OMA" id="MELMHGA"/>
<dbReference type="OrthoDB" id="10248897at2759"/>
<dbReference type="PhylomeDB" id="Q9D0B6"/>
<dbReference type="TreeFam" id="TF314442"/>
<dbReference type="BioGRID-ORCS" id="67683">
    <property type="hits" value="3 hits in 75 CRISPR screens"/>
</dbReference>
<dbReference type="ChiTaRS" id="Pbdc1">
    <property type="organism name" value="mouse"/>
</dbReference>
<dbReference type="PRO" id="PR:Q9D0B6"/>
<dbReference type="Proteomes" id="UP000000589">
    <property type="component" value="Chromosome X"/>
</dbReference>
<dbReference type="RNAct" id="Q9D0B6">
    <property type="molecule type" value="protein"/>
</dbReference>
<dbReference type="Bgee" id="ENSMUSG00000031226">
    <property type="expression patterns" value="Expressed in epiblast (generic) and 72 other cell types or tissues"/>
</dbReference>
<dbReference type="Gene3D" id="1.10.3560.10">
    <property type="entry name" value="yst0336 like domain"/>
    <property type="match status" value="1"/>
</dbReference>
<dbReference type="InterPro" id="IPR023139">
    <property type="entry name" value="PBDC1-like_dom_sf"/>
</dbReference>
<dbReference type="InterPro" id="IPR008476">
    <property type="entry name" value="PBDC1_metazoa/fungi"/>
</dbReference>
<dbReference type="InterPro" id="IPR021148">
    <property type="entry name" value="Polysacc_synth_dom"/>
</dbReference>
<dbReference type="PANTHER" id="PTHR13410">
    <property type="entry name" value="PROTEIN PBDC1"/>
    <property type="match status" value="1"/>
</dbReference>
<dbReference type="PANTHER" id="PTHR13410:SF9">
    <property type="entry name" value="PROTEIN PBDC1"/>
    <property type="match status" value="1"/>
</dbReference>
<dbReference type="Pfam" id="PF04669">
    <property type="entry name" value="PBDC1"/>
    <property type="match status" value="1"/>
</dbReference>
<keyword id="KW-0025">Alternative splicing</keyword>
<keyword id="KW-0597">Phosphoprotein</keyword>
<keyword id="KW-1185">Reference proteome</keyword>
<name>PBDC1_MOUSE</name>
<proteinExistence type="evidence at protein level"/>
<protein>
    <recommendedName>
        <fullName>Protein PBDC1</fullName>
    </recommendedName>
    <alternativeName>
        <fullName>Polysaccharide biosynthesis domain-containing protein 1</fullName>
    </alternativeName>
</protein>
<reference key="1">
    <citation type="journal article" date="2005" name="Science">
        <title>The transcriptional landscape of the mammalian genome.</title>
        <authorList>
            <person name="Carninci P."/>
            <person name="Kasukawa T."/>
            <person name="Katayama S."/>
            <person name="Gough J."/>
            <person name="Frith M.C."/>
            <person name="Maeda N."/>
            <person name="Oyama R."/>
            <person name="Ravasi T."/>
            <person name="Lenhard B."/>
            <person name="Wells C."/>
            <person name="Kodzius R."/>
            <person name="Shimokawa K."/>
            <person name="Bajic V.B."/>
            <person name="Brenner S.E."/>
            <person name="Batalov S."/>
            <person name="Forrest A.R."/>
            <person name="Zavolan M."/>
            <person name="Davis M.J."/>
            <person name="Wilming L.G."/>
            <person name="Aidinis V."/>
            <person name="Allen J.E."/>
            <person name="Ambesi-Impiombato A."/>
            <person name="Apweiler R."/>
            <person name="Aturaliya R.N."/>
            <person name="Bailey T.L."/>
            <person name="Bansal M."/>
            <person name="Baxter L."/>
            <person name="Beisel K.W."/>
            <person name="Bersano T."/>
            <person name="Bono H."/>
            <person name="Chalk A.M."/>
            <person name="Chiu K.P."/>
            <person name="Choudhary V."/>
            <person name="Christoffels A."/>
            <person name="Clutterbuck D.R."/>
            <person name="Crowe M.L."/>
            <person name="Dalla E."/>
            <person name="Dalrymple B.P."/>
            <person name="de Bono B."/>
            <person name="Della Gatta G."/>
            <person name="di Bernardo D."/>
            <person name="Down T."/>
            <person name="Engstrom P."/>
            <person name="Fagiolini M."/>
            <person name="Faulkner G."/>
            <person name="Fletcher C.F."/>
            <person name="Fukushima T."/>
            <person name="Furuno M."/>
            <person name="Futaki S."/>
            <person name="Gariboldi M."/>
            <person name="Georgii-Hemming P."/>
            <person name="Gingeras T.R."/>
            <person name="Gojobori T."/>
            <person name="Green R.E."/>
            <person name="Gustincich S."/>
            <person name="Harbers M."/>
            <person name="Hayashi Y."/>
            <person name="Hensch T.K."/>
            <person name="Hirokawa N."/>
            <person name="Hill D."/>
            <person name="Huminiecki L."/>
            <person name="Iacono M."/>
            <person name="Ikeo K."/>
            <person name="Iwama A."/>
            <person name="Ishikawa T."/>
            <person name="Jakt M."/>
            <person name="Kanapin A."/>
            <person name="Katoh M."/>
            <person name="Kawasawa Y."/>
            <person name="Kelso J."/>
            <person name="Kitamura H."/>
            <person name="Kitano H."/>
            <person name="Kollias G."/>
            <person name="Krishnan S.P."/>
            <person name="Kruger A."/>
            <person name="Kummerfeld S.K."/>
            <person name="Kurochkin I.V."/>
            <person name="Lareau L.F."/>
            <person name="Lazarevic D."/>
            <person name="Lipovich L."/>
            <person name="Liu J."/>
            <person name="Liuni S."/>
            <person name="McWilliam S."/>
            <person name="Madan Babu M."/>
            <person name="Madera M."/>
            <person name="Marchionni L."/>
            <person name="Matsuda H."/>
            <person name="Matsuzawa S."/>
            <person name="Miki H."/>
            <person name="Mignone F."/>
            <person name="Miyake S."/>
            <person name="Morris K."/>
            <person name="Mottagui-Tabar S."/>
            <person name="Mulder N."/>
            <person name="Nakano N."/>
            <person name="Nakauchi H."/>
            <person name="Ng P."/>
            <person name="Nilsson R."/>
            <person name="Nishiguchi S."/>
            <person name="Nishikawa S."/>
            <person name="Nori F."/>
            <person name="Ohara O."/>
            <person name="Okazaki Y."/>
            <person name="Orlando V."/>
            <person name="Pang K.C."/>
            <person name="Pavan W.J."/>
            <person name="Pavesi G."/>
            <person name="Pesole G."/>
            <person name="Petrovsky N."/>
            <person name="Piazza S."/>
            <person name="Reed J."/>
            <person name="Reid J.F."/>
            <person name="Ring B.Z."/>
            <person name="Ringwald M."/>
            <person name="Rost B."/>
            <person name="Ruan Y."/>
            <person name="Salzberg S.L."/>
            <person name="Sandelin A."/>
            <person name="Schneider C."/>
            <person name="Schoenbach C."/>
            <person name="Sekiguchi K."/>
            <person name="Semple C.A."/>
            <person name="Seno S."/>
            <person name="Sessa L."/>
            <person name="Sheng Y."/>
            <person name="Shibata Y."/>
            <person name="Shimada H."/>
            <person name="Shimada K."/>
            <person name="Silva D."/>
            <person name="Sinclair B."/>
            <person name="Sperling S."/>
            <person name="Stupka E."/>
            <person name="Sugiura K."/>
            <person name="Sultana R."/>
            <person name="Takenaka Y."/>
            <person name="Taki K."/>
            <person name="Tammoja K."/>
            <person name="Tan S.L."/>
            <person name="Tang S."/>
            <person name="Taylor M.S."/>
            <person name="Tegner J."/>
            <person name="Teichmann S.A."/>
            <person name="Ueda H.R."/>
            <person name="van Nimwegen E."/>
            <person name="Verardo R."/>
            <person name="Wei C.L."/>
            <person name="Yagi K."/>
            <person name="Yamanishi H."/>
            <person name="Zabarovsky E."/>
            <person name="Zhu S."/>
            <person name="Zimmer A."/>
            <person name="Hide W."/>
            <person name="Bult C."/>
            <person name="Grimmond S.M."/>
            <person name="Teasdale R.D."/>
            <person name="Liu E.T."/>
            <person name="Brusic V."/>
            <person name="Quackenbush J."/>
            <person name="Wahlestedt C."/>
            <person name="Mattick J.S."/>
            <person name="Hume D.A."/>
            <person name="Kai C."/>
            <person name="Sasaki D."/>
            <person name="Tomaru Y."/>
            <person name="Fukuda S."/>
            <person name="Kanamori-Katayama M."/>
            <person name="Suzuki M."/>
            <person name="Aoki J."/>
            <person name="Arakawa T."/>
            <person name="Iida J."/>
            <person name="Imamura K."/>
            <person name="Itoh M."/>
            <person name="Kato T."/>
            <person name="Kawaji H."/>
            <person name="Kawagashira N."/>
            <person name="Kawashima T."/>
            <person name="Kojima M."/>
            <person name="Kondo S."/>
            <person name="Konno H."/>
            <person name="Nakano K."/>
            <person name="Ninomiya N."/>
            <person name="Nishio T."/>
            <person name="Okada M."/>
            <person name="Plessy C."/>
            <person name="Shibata K."/>
            <person name="Shiraki T."/>
            <person name="Suzuki S."/>
            <person name="Tagami M."/>
            <person name="Waki K."/>
            <person name="Watahiki A."/>
            <person name="Okamura-Oho Y."/>
            <person name="Suzuki H."/>
            <person name="Kawai J."/>
            <person name="Hayashizaki Y."/>
        </authorList>
    </citation>
    <scope>NUCLEOTIDE SEQUENCE [LARGE SCALE MRNA] (ISOFORMS 1 AND 2)</scope>
    <source>
        <strain>C57BL/6J</strain>
        <tissue>Embryo</tissue>
        <tissue>Pancreas</tissue>
        <tissue>Pituitary</tissue>
        <tissue>Testis</tissue>
    </source>
</reference>
<reference key="2">
    <citation type="journal article" date="2009" name="PLoS Biol.">
        <title>Lineage-specific biology revealed by a finished genome assembly of the mouse.</title>
        <authorList>
            <person name="Church D.M."/>
            <person name="Goodstadt L."/>
            <person name="Hillier L.W."/>
            <person name="Zody M.C."/>
            <person name="Goldstein S."/>
            <person name="She X."/>
            <person name="Bult C.J."/>
            <person name="Agarwala R."/>
            <person name="Cherry J.L."/>
            <person name="DiCuccio M."/>
            <person name="Hlavina W."/>
            <person name="Kapustin Y."/>
            <person name="Meric P."/>
            <person name="Maglott D."/>
            <person name="Birtle Z."/>
            <person name="Marques A.C."/>
            <person name="Graves T."/>
            <person name="Zhou S."/>
            <person name="Teague B."/>
            <person name="Potamousis K."/>
            <person name="Churas C."/>
            <person name="Place M."/>
            <person name="Herschleb J."/>
            <person name="Runnheim R."/>
            <person name="Forrest D."/>
            <person name="Amos-Landgraf J."/>
            <person name="Schwartz D.C."/>
            <person name="Cheng Z."/>
            <person name="Lindblad-Toh K."/>
            <person name="Eichler E.E."/>
            <person name="Ponting C.P."/>
        </authorList>
    </citation>
    <scope>NUCLEOTIDE SEQUENCE [LARGE SCALE GENOMIC DNA]</scope>
    <source>
        <strain>C57BL/6J</strain>
    </source>
</reference>
<reference key="3">
    <citation type="journal article" date="2004" name="Genome Res.">
        <title>The status, quality, and expansion of the NIH full-length cDNA project: the Mammalian Gene Collection (MGC).</title>
        <authorList>
            <consortium name="The MGC Project Team"/>
        </authorList>
    </citation>
    <scope>NUCLEOTIDE SEQUENCE [LARGE SCALE MRNA] (ISOFORM 1)</scope>
    <source>
        <strain>C57BL/6J</strain>
        <strain>FVB/N</strain>
        <tissue>Brain</tissue>
        <tissue>Colon</tissue>
        <tissue>Thymus</tissue>
    </source>
</reference>
<reference key="4">
    <citation type="journal article" date="2010" name="Cell">
        <title>A tissue-specific atlas of mouse protein phosphorylation and expression.</title>
        <authorList>
            <person name="Huttlin E.L."/>
            <person name="Jedrychowski M.P."/>
            <person name="Elias J.E."/>
            <person name="Goswami T."/>
            <person name="Rad R."/>
            <person name="Beausoleil S.A."/>
            <person name="Villen J."/>
            <person name="Haas W."/>
            <person name="Sowa M.E."/>
            <person name="Gygi S.P."/>
        </authorList>
    </citation>
    <scope>IDENTIFICATION BY MASS SPECTROMETRY [LARGE SCALE ANALYSIS]</scope>
    <source>
        <tissue>Brain</tissue>
        <tissue>Brown adipose tissue</tissue>
        <tissue>Heart</tissue>
        <tissue>Kidney</tissue>
        <tissue>Liver</tissue>
        <tissue>Lung</tissue>
        <tissue>Pancreas</tissue>
        <tissue>Spleen</tissue>
        <tissue>Testis</tissue>
    </source>
</reference>
<sequence length="198" mass="22223">MDAAGESEEPVSGEALSIAHALSHPPESYGNDPDIEMAWAIRAMQHAEVYYKLISSVDPQFLKLTKVDDQIYSEFREIFETLRVDVLDPEELKSESAKEKWRPFCLKFEGIVEDYNYGTLLRLDCSQGYTEENTIFAPRIQFFAIEIARNREGYNKAVSVSIQDKEGEEGAGNKEEAAEKGADSGGEKEEGANREGEK</sequence>
<organism>
    <name type="scientific">Mus musculus</name>
    <name type="common">Mouse</name>
    <dbReference type="NCBI Taxonomy" id="10090"/>
    <lineage>
        <taxon>Eukaryota</taxon>
        <taxon>Metazoa</taxon>
        <taxon>Chordata</taxon>
        <taxon>Craniata</taxon>
        <taxon>Vertebrata</taxon>
        <taxon>Euteleostomi</taxon>
        <taxon>Mammalia</taxon>
        <taxon>Eutheria</taxon>
        <taxon>Euarchontoglires</taxon>
        <taxon>Glires</taxon>
        <taxon>Rodentia</taxon>
        <taxon>Myomorpha</taxon>
        <taxon>Muroidea</taxon>
        <taxon>Muridae</taxon>
        <taxon>Murinae</taxon>
        <taxon>Mus</taxon>
        <taxon>Mus</taxon>
    </lineage>
</organism>
<evidence type="ECO:0000250" key="1">
    <source>
        <dbReference type="UniProtKB" id="Q9BVG4"/>
    </source>
</evidence>
<evidence type="ECO:0000256" key="2">
    <source>
        <dbReference type="SAM" id="MobiDB-lite"/>
    </source>
</evidence>
<evidence type="ECO:0000303" key="3">
    <source>
    </source>
</evidence>
<evidence type="ECO:0000305" key="4"/>
<gene>
    <name type="primary">Pbdc1</name>
</gene>
<feature type="chain" id="PRO_0000254106" description="Protein PBDC1">
    <location>
        <begin position="1"/>
        <end position="198"/>
    </location>
</feature>
<feature type="region of interest" description="Disordered" evidence="2">
    <location>
        <begin position="163"/>
        <end position="198"/>
    </location>
</feature>
<feature type="compositionally biased region" description="Basic and acidic residues" evidence="2">
    <location>
        <begin position="171"/>
        <end position="198"/>
    </location>
</feature>
<feature type="modified residue" description="Phosphoserine" evidence="1">
    <location>
        <position position="126"/>
    </location>
</feature>
<feature type="modified residue" description="Phosphoserine" evidence="1">
    <location>
        <position position="184"/>
    </location>
</feature>
<feature type="splice variant" id="VSP_021180" description="In isoform 2." evidence="3">
    <location>
        <begin position="138"/>
        <end position="198"/>
    </location>
</feature>